<keyword id="KW-0066">ATP synthesis</keyword>
<keyword id="KW-1003">Cell membrane</keyword>
<keyword id="KW-0138">CF(0)</keyword>
<keyword id="KW-0375">Hydrogen ion transport</keyword>
<keyword id="KW-0406">Ion transport</keyword>
<keyword id="KW-0472">Membrane</keyword>
<keyword id="KW-1185">Reference proteome</keyword>
<keyword id="KW-0812">Transmembrane</keyword>
<keyword id="KW-1133">Transmembrane helix</keyword>
<keyword id="KW-0813">Transport</keyword>
<dbReference type="EMBL" id="AF330160">
    <property type="protein sequence ID" value="AAG48359.1"/>
    <property type="molecule type" value="Genomic_DNA"/>
</dbReference>
<dbReference type="EMBL" id="CP001878">
    <property type="protein sequence ID" value="ADC49432.1"/>
    <property type="molecule type" value="Genomic_DNA"/>
</dbReference>
<dbReference type="PIR" id="S17722">
    <property type="entry name" value="S17722"/>
</dbReference>
<dbReference type="RefSeq" id="WP_012960705.1">
    <property type="nucleotide sequence ID" value="NC_013791.2"/>
</dbReference>
<dbReference type="SMR" id="P22481"/>
<dbReference type="STRING" id="398511.BpOF4_06870"/>
<dbReference type="KEGG" id="bpf:BpOF4_06870"/>
<dbReference type="eggNOG" id="COG0711">
    <property type="taxonomic scope" value="Bacteria"/>
</dbReference>
<dbReference type="HOGENOM" id="CLU_079215_4_2_9"/>
<dbReference type="Proteomes" id="UP000001544">
    <property type="component" value="Chromosome"/>
</dbReference>
<dbReference type="GO" id="GO:0005886">
    <property type="term" value="C:plasma membrane"/>
    <property type="evidence" value="ECO:0007669"/>
    <property type="project" value="UniProtKB-SubCell"/>
</dbReference>
<dbReference type="GO" id="GO:0045259">
    <property type="term" value="C:proton-transporting ATP synthase complex"/>
    <property type="evidence" value="ECO:0007669"/>
    <property type="project" value="UniProtKB-KW"/>
</dbReference>
<dbReference type="GO" id="GO:0046933">
    <property type="term" value="F:proton-transporting ATP synthase activity, rotational mechanism"/>
    <property type="evidence" value="ECO:0007669"/>
    <property type="project" value="UniProtKB-UniRule"/>
</dbReference>
<dbReference type="GO" id="GO:0046961">
    <property type="term" value="F:proton-transporting ATPase activity, rotational mechanism"/>
    <property type="evidence" value="ECO:0007669"/>
    <property type="project" value="TreeGrafter"/>
</dbReference>
<dbReference type="CDD" id="cd06503">
    <property type="entry name" value="ATP-synt_Fo_b"/>
    <property type="match status" value="1"/>
</dbReference>
<dbReference type="Gene3D" id="6.10.250.1580">
    <property type="match status" value="1"/>
</dbReference>
<dbReference type="HAMAP" id="MF_01398">
    <property type="entry name" value="ATP_synth_b_bprime"/>
    <property type="match status" value="1"/>
</dbReference>
<dbReference type="InterPro" id="IPR028987">
    <property type="entry name" value="ATP_synth_B-like_membr_sf"/>
</dbReference>
<dbReference type="InterPro" id="IPR002146">
    <property type="entry name" value="ATP_synth_b/b'su_bac/chlpt"/>
</dbReference>
<dbReference type="InterPro" id="IPR005864">
    <property type="entry name" value="ATP_synth_F0_bsu_bac"/>
</dbReference>
<dbReference type="InterPro" id="IPR050059">
    <property type="entry name" value="ATP_synthase_B_chain"/>
</dbReference>
<dbReference type="NCBIfam" id="TIGR01144">
    <property type="entry name" value="ATP_synt_b"/>
    <property type="match status" value="1"/>
</dbReference>
<dbReference type="PANTHER" id="PTHR33445:SF1">
    <property type="entry name" value="ATP SYNTHASE SUBUNIT B"/>
    <property type="match status" value="1"/>
</dbReference>
<dbReference type="PANTHER" id="PTHR33445">
    <property type="entry name" value="ATP SYNTHASE SUBUNIT B', CHLOROPLASTIC"/>
    <property type="match status" value="1"/>
</dbReference>
<dbReference type="Pfam" id="PF00430">
    <property type="entry name" value="ATP-synt_B"/>
    <property type="match status" value="1"/>
</dbReference>
<dbReference type="SUPFAM" id="SSF81573">
    <property type="entry name" value="F1F0 ATP synthase subunit B, membrane domain"/>
    <property type="match status" value="1"/>
</dbReference>
<protein>
    <recommendedName>
        <fullName evidence="1">ATP synthase subunit b</fullName>
    </recommendedName>
    <alternativeName>
        <fullName evidence="1">ATP synthase F(0) sector subunit b</fullName>
    </alternativeName>
    <alternativeName>
        <fullName evidence="1">ATPase subunit I</fullName>
    </alternativeName>
    <alternativeName>
        <fullName evidence="1">F-type ATPase subunit b</fullName>
        <shortName evidence="1">F-ATPase subunit b</shortName>
    </alternativeName>
</protein>
<feature type="chain" id="PRO_0000082363" description="ATP synthase subunit b">
    <location>
        <begin position="1"/>
        <end position="163"/>
    </location>
</feature>
<feature type="transmembrane region" description="Helical" evidence="1">
    <location>
        <begin position="10"/>
        <end position="29"/>
    </location>
</feature>
<gene>
    <name evidence="1" type="primary">atpF</name>
    <name type="ordered locus">BpOF4_06870</name>
</gene>
<accession>P22481</accession>
<accession>D3G0F7</accession>
<evidence type="ECO:0000255" key="1">
    <source>
        <dbReference type="HAMAP-Rule" id="MF_01398"/>
    </source>
</evidence>
<comment type="function">
    <text evidence="1">F(1)F(0) ATP synthase produces ATP from ADP in the presence of a proton or sodium gradient. F-type ATPases consist of two structural domains, F(1) containing the extramembraneous catalytic core and F(0) containing the membrane proton channel, linked together by a central stalk and a peripheral stalk. During catalysis, ATP synthesis in the catalytic domain of F(1) is coupled via a rotary mechanism of the central stalk subunits to proton translocation.</text>
</comment>
<comment type="function">
    <text evidence="1">Component of the F(0) channel, it forms part of the peripheral stalk, linking F(1) to F(0).</text>
</comment>
<comment type="subunit">
    <text evidence="1">F-type ATPases have 2 components, F(1) - the catalytic core - and F(0) - the membrane proton channel. F(1) has five subunits: alpha(3), beta(3), gamma(1), delta(1), epsilon(1). F(0) has three main subunits: a(1), b(2) and c(10-14). The alpha and beta chains form an alternating ring which encloses part of the gamma chain. F(1) is attached to F(0) by a central stalk formed by the gamma and epsilon chains, while a peripheral stalk is formed by the delta and b chains.</text>
</comment>
<comment type="subcellular location">
    <subcellularLocation>
        <location evidence="1">Cell membrane</location>
        <topology evidence="1">Single-pass membrane protein</topology>
    </subcellularLocation>
</comment>
<comment type="similarity">
    <text evidence="1">Belongs to the ATPase B chain family.</text>
</comment>
<name>ATPF_ALKPO</name>
<reference key="1">
    <citation type="journal article" date="1991" name="Mol. Gen. Genet.">
        <title>Organization and nucleotide sequence of the atp genes encoding the ATP synthase from alkaliphilic Bacillus firmus OF4.</title>
        <authorList>
            <person name="Ivey D.M."/>
            <person name="Krulwich T.A."/>
        </authorList>
    </citation>
    <scope>NUCLEOTIDE SEQUENCE [GENOMIC DNA]</scope>
</reference>
<reference key="2">
    <citation type="submission" date="2000-12" db="EMBL/GenBank/DDBJ databases">
        <authorList>
            <person name="Hicks D."/>
            <person name="Krulwich T.A."/>
        </authorList>
    </citation>
    <scope>SEQUENCE REVISION</scope>
</reference>
<reference key="3">
    <citation type="journal article" date="2011" name="Environ. Microbiol.">
        <title>Genome of alkaliphilic Bacillus pseudofirmus OF4 reveals adaptations that support the ability to grow in an external pH range from 7.5 to 11.4.</title>
        <authorList>
            <person name="Janto B."/>
            <person name="Ahmed A."/>
            <person name="Ito M."/>
            <person name="Liu J."/>
            <person name="Hicks D.B."/>
            <person name="Pagni S."/>
            <person name="Fackelmayer O.J."/>
            <person name="Smith T.A."/>
            <person name="Earl J."/>
            <person name="Elbourne L.D."/>
            <person name="Hassan K."/>
            <person name="Paulsen I.T."/>
            <person name="Kolsto A.B."/>
            <person name="Tourasse N.J."/>
            <person name="Ehrlich G.D."/>
            <person name="Boissy R."/>
            <person name="Ivey D.M."/>
            <person name="Li G."/>
            <person name="Xue Y."/>
            <person name="Ma Y."/>
            <person name="Hu F.Z."/>
            <person name="Krulwich T.A."/>
        </authorList>
    </citation>
    <scope>NUCLEOTIDE SEQUENCE [LARGE SCALE GENOMIC DNA]</scope>
    <source>
        <strain>ATCC BAA-2126 / JCM 17055 / OF4</strain>
    </source>
</reference>
<proteinExistence type="inferred from homology"/>
<organism>
    <name type="scientific">Alkalihalophilus pseudofirmus (strain ATCC BAA-2126 / JCM 17055 / OF4)</name>
    <name type="common">Bacillus pseudofirmus</name>
    <dbReference type="NCBI Taxonomy" id="398511"/>
    <lineage>
        <taxon>Bacteria</taxon>
        <taxon>Bacillati</taxon>
        <taxon>Bacillota</taxon>
        <taxon>Bacilli</taxon>
        <taxon>Bacillales</taxon>
        <taxon>Bacillaceae</taxon>
        <taxon>Alkalihalophilus</taxon>
    </lineage>
</organism>
<sequence length="163" mass="18511">MGFDINWGSALYQLLAFSVLLFFLSKFALKPLLGIMEKREQMINEQISSAEKNRKDSEAFIAEQRQALEQARMEANEIIQNAKKLSEQQGQDIVKAARNDAERIKESAVAEIQREKEQAVSALREQVAGLSVLIATKVIEKELNEAEQEKLVQEYLKEVGEEL</sequence>